<organism>
    <name type="scientific">Petunia hybrida</name>
    <name type="common">Petunia</name>
    <dbReference type="NCBI Taxonomy" id="4102"/>
    <lineage>
        <taxon>Eukaryota</taxon>
        <taxon>Viridiplantae</taxon>
        <taxon>Streptophyta</taxon>
        <taxon>Embryophyta</taxon>
        <taxon>Tracheophyta</taxon>
        <taxon>Spermatophyta</taxon>
        <taxon>Magnoliopsida</taxon>
        <taxon>eudicotyledons</taxon>
        <taxon>Gunneridae</taxon>
        <taxon>Pentapetalae</taxon>
        <taxon>asterids</taxon>
        <taxon>lamiids</taxon>
        <taxon>Solanales</taxon>
        <taxon>Solanaceae</taxon>
        <taxon>Petunioideae</taxon>
        <taxon>Petunia</taxon>
    </lineage>
</organism>
<accession>P29021</accession>
<sequence>MKFWGSVLALSFVVFLFLTGTLAQNVGSIVTSDLFDQMLKNRNDARCFAVRFYTYDAFIAAANSFPGFGTTGDDTARKKEIAAFFGQTSHETTGGTLSPDGPYAGGYCFLREGNQMGNGYYGRGPIQLTGQSNYDLAGKAIEQDLVNNPDLVATDATVSFKTAIWFWMTPQGNKPSCHDVITGRWTPSAADTSANRVPGYGVITNIINGGIECGKGQNARVEDRIGYYRRNVSIMNVAPGDNLDCYNQRNFAEV</sequence>
<proteinExistence type="evidence at transcript level"/>
<feature type="signal peptide" evidence="1">
    <location>
        <begin position="1"/>
        <end position="23"/>
    </location>
</feature>
<feature type="chain" id="PRO_0000005310" description="Acidic endochitinase">
    <location>
        <begin position="24"/>
        <end position="254"/>
    </location>
</feature>
<feature type="active site" description="Proton donor" evidence="2">
    <location>
        <position position="91"/>
    </location>
</feature>
<feature type="disulfide bond" evidence="1">
    <location>
        <begin position="213"/>
        <end position="245"/>
    </location>
</feature>
<comment type="function">
    <text>Defense against chitin-containing fungal pathogens.</text>
</comment>
<comment type="catalytic activity">
    <reaction>
        <text>Random endo-hydrolysis of N-acetyl-beta-D-glucosaminide (1-&gt;4)-beta-linkages in chitin and chitodextrins.</text>
        <dbReference type="EC" id="3.2.1.14"/>
    </reaction>
</comment>
<comment type="subcellular location">
    <subcellularLocation>
        <location>Secreted</location>
    </subcellularLocation>
    <text>Extracellular fluid from leaves.</text>
</comment>
<comment type="similarity">
    <text evidence="3">Belongs to the glycosyl hydrolase 19 family. Chitinase class II subfamily.</text>
</comment>
<keyword id="KW-0119">Carbohydrate metabolism</keyword>
<keyword id="KW-0146">Chitin degradation</keyword>
<keyword id="KW-1015">Disulfide bond</keyword>
<keyword id="KW-0326">Glycosidase</keyword>
<keyword id="KW-0378">Hydrolase</keyword>
<keyword id="KW-0568">Pathogenesis-related protein</keyword>
<keyword id="KW-0611">Plant defense</keyword>
<keyword id="KW-0624">Polysaccharide degradation</keyword>
<keyword id="KW-0964">Secreted</keyword>
<keyword id="KW-0732">Signal</keyword>
<dbReference type="EC" id="3.2.1.14"/>
<dbReference type="EMBL" id="X51427">
    <property type="protein sequence ID" value="CAA35791.1"/>
    <property type="molecule type" value="mRNA"/>
</dbReference>
<dbReference type="EMBL" id="A16118">
    <property type="protein sequence ID" value="CAA01262.1"/>
    <property type="molecule type" value="Unassigned_RNA"/>
</dbReference>
<dbReference type="PIR" id="S20741">
    <property type="entry name" value="S20741"/>
</dbReference>
<dbReference type="SMR" id="P29021"/>
<dbReference type="CAZy" id="GH19">
    <property type="family name" value="Glycoside Hydrolase Family 19"/>
</dbReference>
<dbReference type="GO" id="GO:0005576">
    <property type="term" value="C:extracellular region"/>
    <property type="evidence" value="ECO:0007669"/>
    <property type="project" value="UniProtKB-SubCell"/>
</dbReference>
<dbReference type="GO" id="GO:0008843">
    <property type="term" value="F:endochitinase activity"/>
    <property type="evidence" value="ECO:0007669"/>
    <property type="project" value="UniProtKB-EC"/>
</dbReference>
<dbReference type="GO" id="GO:0016998">
    <property type="term" value="P:cell wall macromolecule catabolic process"/>
    <property type="evidence" value="ECO:0007669"/>
    <property type="project" value="InterPro"/>
</dbReference>
<dbReference type="GO" id="GO:0006032">
    <property type="term" value="P:chitin catabolic process"/>
    <property type="evidence" value="ECO:0007669"/>
    <property type="project" value="UniProtKB-KW"/>
</dbReference>
<dbReference type="GO" id="GO:0050832">
    <property type="term" value="P:defense response to fungus"/>
    <property type="evidence" value="ECO:0007669"/>
    <property type="project" value="TreeGrafter"/>
</dbReference>
<dbReference type="GO" id="GO:0000272">
    <property type="term" value="P:polysaccharide catabolic process"/>
    <property type="evidence" value="ECO:0007669"/>
    <property type="project" value="UniProtKB-KW"/>
</dbReference>
<dbReference type="CDD" id="cd00325">
    <property type="entry name" value="chitinase_GH19"/>
    <property type="match status" value="1"/>
</dbReference>
<dbReference type="FunFam" id="3.30.20.10:FF:000002">
    <property type="entry name" value="Acidic endochitinase pcht28"/>
    <property type="match status" value="1"/>
</dbReference>
<dbReference type="Gene3D" id="1.10.530.10">
    <property type="match status" value="1"/>
</dbReference>
<dbReference type="Gene3D" id="3.30.20.10">
    <property type="entry name" value="Endochitinase, domain 2"/>
    <property type="match status" value="1"/>
</dbReference>
<dbReference type="InterPro" id="IPR016283">
    <property type="entry name" value="Glyco_hydro_19"/>
</dbReference>
<dbReference type="InterPro" id="IPR000726">
    <property type="entry name" value="Glyco_hydro_19_cat"/>
</dbReference>
<dbReference type="InterPro" id="IPR023346">
    <property type="entry name" value="Lysozyme-like_dom_sf"/>
</dbReference>
<dbReference type="PANTHER" id="PTHR22595:SF171">
    <property type="entry name" value="BASIC ENDOCHITINASE B"/>
    <property type="match status" value="1"/>
</dbReference>
<dbReference type="PANTHER" id="PTHR22595">
    <property type="entry name" value="CHITINASE-RELATED"/>
    <property type="match status" value="1"/>
</dbReference>
<dbReference type="Pfam" id="PF00182">
    <property type="entry name" value="Glyco_hydro_19"/>
    <property type="match status" value="1"/>
</dbReference>
<dbReference type="PIRSF" id="PIRSF001060">
    <property type="entry name" value="Endochitinase"/>
    <property type="match status" value="1"/>
</dbReference>
<dbReference type="SUPFAM" id="SSF53955">
    <property type="entry name" value="Lysozyme-like"/>
    <property type="match status" value="1"/>
</dbReference>
<dbReference type="PROSITE" id="PS00773">
    <property type="entry name" value="CHITINASE_19_1"/>
    <property type="match status" value="1"/>
</dbReference>
<dbReference type="PROSITE" id="PS00774">
    <property type="entry name" value="CHITINASE_19_2"/>
    <property type="match status" value="1"/>
</dbReference>
<evidence type="ECO:0000250" key="1"/>
<evidence type="ECO:0000250" key="2">
    <source>
        <dbReference type="UniProtKB" id="P29022"/>
    </source>
</evidence>
<evidence type="ECO:0000305" key="3"/>
<protein>
    <recommendedName>
        <fullName>Acidic endochitinase</fullName>
        <ecNumber>3.2.1.14</ecNumber>
    </recommendedName>
</protein>
<reference key="1">
    <citation type="journal article" date="1990" name="Mol. Plant Microbe Interact.">
        <title>Analysis of acidic and basic chitinases from tobacco and petunia and their constitutive expression in transgenic tobacco.</title>
        <authorList>
            <person name="Linthorst H.J.M."/>
            <person name="van Loon L.C."/>
            <person name="van Rossum C.M.A."/>
            <person name="Mayer A."/>
            <person name="Bol J.F."/>
            <person name="van Roekel J."/>
            <person name="Meulenhof J."/>
            <person name="Conelissen B.J.C."/>
        </authorList>
    </citation>
    <scope>NUCLEOTIDE SEQUENCE [MRNA]</scope>
    <source>
        <tissue>Leaf</tissue>
    </source>
</reference>
<name>CHIT_PETHY</name>